<comment type="function">
    <text evidence="1">This is one of the proteins that bind and probably mediate the attachment of the 5S RNA into the large ribosomal subunit, where it forms part of the central protuberance.</text>
</comment>
<comment type="subunit">
    <text evidence="1">Part of the 50S ribosomal subunit; part of the 5S rRNA/L5/L18/L25 subcomplex. Contacts the 5S and 23S rRNAs.</text>
</comment>
<comment type="similarity">
    <text evidence="1">Belongs to the universal ribosomal protein uL18 family.</text>
</comment>
<gene>
    <name evidence="1" type="primary">rplR</name>
    <name type="ordered locus">MT0745</name>
</gene>
<evidence type="ECO:0000255" key="1">
    <source>
        <dbReference type="HAMAP-Rule" id="MF_01337"/>
    </source>
</evidence>
<evidence type="ECO:0000305" key="2"/>
<organism>
    <name type="scientific">Mycobacterium tuberculosis (strain CDC 1551 / Oshkosh)</name>
    <dbReference type="NCBI Taxonomy" id="83331"/>
    <lineage>
        <taxon>Bacteria</taxon>
        <taxon>Bacillati</taxon>
        <taxon>Actinomycetota</taxon>
        <taxon>Actinomycetes</taxon>
        <taxon>Mycobacteriales</taxon>
        <taxon>Mycobacteriaceae</taxon>
        <taxon>Mycobacterium</taxon>
        <taxon>Mycobacterium tuberculosis complex</taxon>
    </lineage>
</organism>
<accession>P9WHD0</accession>
<accession>L0T6A3</accession>
<accession>P66076</accession>
<accession>P95068</accession>
<protein>
    <recommendedName>
        <fullName evidence="1">Large ribosomal subunit protein uL18</fullName>
    </recommendedName>
    <alternativeName>
        <fullName evidence="2">50S ribosomal protein L18</fullName>
    </alternativeName>
</protein>
<keyword id="KW-1185">Reference proteome</keyword>
<keyword id="KW-0687">Ribonucleoprotein</keyword>
<keyword id="KW-0689">Ribosomal protein</keyword>
<keyword id="KW-0694">RNA-binding</keyword>
<keyword id="KW-0699">rRNA-binding</keyword>
<sequence>MAQSVSATRRISRLRRHTRLRKKLSGTAERPRLVVHRSARHIHVQLVNDLNGTTVAAASSIEADVRGVPGDKKARSVRVGQLIAERAKAAGIDTVVFDRGGYTYGGRIAALADAARENGLSF</sequence>
<proteinExistence type="inferred from homology"/>
<feature type="chain" id="PRO_0000428208" description="Large ribosomal subunit protein uL18">
    <location>
        <begin position="1"/>
        <end position="122"/>
    </location>
</feature>
<reference key="1">
    <citation type="journal article" date="2002" name="J. Bacteriol.">
        <title>Whole-genome comparison of Mycobacterium tuberculosis clinical and laboratory strains.</title>
        <authorList>
            <person name="Fleischmann R.D."/>
            <person name="Alland D."/>
            <person name="Eisen J.A."/>
            <person name="Carpenter L."/>
            <person name="White O."/>
            <person name="Peterson J.D."/>
            <person name="DeBoy R.T."/>
            <person name="Dodson R.J."/>
            <person name="Gwinn M.L."/>
            <person name="Haft D.H."/>
            <person name="Hickey E.K."/>
            <person name="Kolonay J.F."/>
            <person name="Nelson W.C."/>
            <person name="Umayam L.A."/>
            <person name="Ermolaeva M.D."/>
            <person name="Salzberg S.L."/>
            <person name="Delcher A."/>
            <person name="Utterback T.R."/>
            <person name="Weidman J.F."/>
            <person name="Khouri H.M."/>
            <person name="Gill J."/>
            <person name="Mikula A."/>
            <person name="Bishai W."/>
            <person name="Jacobs W.R. Jr."/>
            <person name="Venter J.C."/>
            <person name="Fraser C.M."/>
        </authorList>
    </citation>
    <scope>NUCLEOTIDE SEQUENCE [LARGE SCALE GENOMIC DNA]</scope>
    <source>
        <strain>CDC 1551 / Oshkosh</strain>
    </source>
</reference>
<dbReference type="EMBL" id="AE000516">
    <property type="protein sequence ID" value="AAK44979.1"/>
    <property type="molecule type" value="Genomic_DNA"/>
</dbReference>
<dbReference type="PIR" id="C70644">
    <property type="entry name" value="C70644"/>
</dbReference>
<dbReference type="RefSeq" id="WP_003403677.1">
    <property type="nucleotide sequence ID" value="NZ_KK341227.1"/>
</dbReference>
<dbReference type="SMR" id="P9WHD0"/>
<dbReference type="GeneID" id="45424685"/>
<dbReference type="KEGG" id="mtc:MT0745"/>
<dbReference type="PATRIC" id="fig|83331.31.peg.798"/>
<dbReference type="HOGENOM" id="CLU_098841_0_1_11"/>
<dbReference type="Proteomes" id="UP000001020">
    <property type="component" value="Chromosome"/>
</dbReference>
<dbReference type="GO" id="GO:0022625">
    <property type="term" value="C:cytosolic large ribosomal subunit"/>
    <property type="evidence" value="ECO:0007669"/>
    <property type="project" value="TreeGrafter"/>
</dbReference>
<dbReference type="GO" id="GO:0008097">
    <property type="term" value="F:5S rRNA binding"/>
    <property type="evidence" value="ECO:0007669"/>
    <property type="project" value="TreeGrafter"/>
</dbReference>
<dbReference type="GO" id="GO:0003735">
    <property type="term" value="F:structural constituent of ribosome"/>
    <property type="evidence" value="ECO:0007669"/>
    <property type="project" value="InterPro"/>
</dbReference>
<dbReference type="GO" id="GO:0006412">
    <property type="term" value="P:translation"/>
    <property type="evidence" value="ECO:0007669"/>
    <property type="project" value="UniProtKB-UniRule"/>
</dbReference>
<dbReference type="CDD" id="cd00432">
    <property type="entry name" value="Ribosomal_L18_L5e"/>
    <property type="match status" value="1"/>
</dbReference>
<dbReference type="FunFam" id="3.30.420.100:FF:000001">
    <property type="entry name" value="50S ribosomal protein L18"/>
    <property type="match status" value="1"/>
</dbReference>
<dbReference type="Gene3D" id="3.30.420.100">
    <property type="match status" value="1"/>
</dbReference>
<dbReference type="HAMAP" id="MF_01337_B">
    <property type="entry name" value="Ribosomal_uL18_B"/>
    <property type="match status" value="1"/>
</dbReference>
<dbReference type="InterPro" id="IPR004389">
    <property type="entry name" value="Ribosomal_uL18_bac-type"/>
</dbReference>
<dbReference type="InterPro" id="IPR005484">
    <property type="entry name" value="Ribosomal_uL18_bac/euk"/>
</dbReference>
<dbReference type="NCBIfam" id="TIGR00060">
    <property type="entry name" value="L18_bact"/>
    <property type="match status" value="1"/>
</dbReference>
<dbReference type="PANTHER" id="PTHR12899">
    <property type="entry name" value="39S RIBOSOMAL PROTEIN L18, MITOCHONDRIAL"/>
    <property type="match status" value="1"/>
</dbReference>
<dbReference type="PANTHER" id="PTHR12899:SF3">
    <property type="entry name" value="LARGE RIBOSOMAL SUBUNIT PROTEIN UL18M"/>
    <property type="match status" value="1"/>
</dbReference>
<dbReference type="Pfam" id="PF00861">
    <property type="entry name" value="Ribosomal_L18p"/>
    <property type="match status" value="1"/>
</dbReference>
<dbReference type="SUPFAM" id="SSF53137">
    <property type="entry name" value="Translational machinery components"/>
    <property type="match status" value="1"/>
</dbReference>
<name>RL18_MYCTO</name>